<name>RNH_ACIF5</name>
<protein>
    <recommendedName>
        <fullName evidence="1">Ribonuclease H</fullName>
        <shortName evidence="1">RNase H</shortName>
        <ecNumber evidence="1">3.1.26.4</ecNumber>
    </recommendedName>
</protein>
<proteinExistence type="inferred from homology"/>
<organism>
    <name type="scientific">Acidithiobacillus ferrooxidans (strain ATCC 53993 / BNL-5-31)</name>
    <name type="common">Leptospirillum ferrooxidans (ATCC 53993)</name>
    <dbReference type="NCBI Taxonomy" id="380394"/>
    <lineage>
        <taxon>Bacteria</taxon>
        <taxon>Pseudomonadati</taxon>
        <taxon>Pseudomonadota</taxon>
        <taxon>Acidithiobacillia</taxon>
        <taxon>Acidithiobacillales</taxon>
        <taxon>Acidithiobacillaceae</taxon>
        <taxon>Acidithiobacillus</taxon>
    </lineage>
</organism>
<accession>B5EMD8</accession>
<evidence type="ECO:0000255" key="1">
    <source>
        <dbReference type="HAMAP-Rule" id="MF_00042"/>
    </source>
</evidence>
<evidence type="ECO:0000255" key="2">
    <source>
        <dbReference type="PROSITE-ProRule" id="PRU00408"/>
    </source>
</evidence>
<sequence>MPEKIIELFTDGGCRGNPGIGAWGVWLRLAGQERVLWGFVPETTNNRMELTAALRGLEALKRPSAVRVISDSRYLRDGMTQWLAGWQRRGWRTAGGDAVKNRDIWELLAAVAARHQVQWEWVRGHSGHIENERVDALLNRVMDQYAAGGQAREGEGWL</sequence>
<comment type="function">
    <text evidence="1">Endonuclease that specifically degrades the RNA of RNA-DNA hybrids.</text>
</comment>
<comment type="catalytic activity">
    <reaction evidence="1">
        <text>Endonucleolytic cleavage to 5'-phosphomonoester.</text>
        <dbReference type="EC" id="3.1.26.4"/>
    </reaction>
</comment>
<comment type="cofactor">
    <cofactor evidence="1">
        <name>Mg(2+)</name>
        <dbReference type="ChEBI" id="CHEBI:18420"/>
    </cofactor>
    <text evidence="1">Binds 1 Mg(2+) ion per subunit. May bind a second metal ion at a regulatory site, or after substrate binding.</text>
</comment>
<comment type="subunit">
    <text evidence="1">Monomer.</text>
</comment>
<comment type="subcellular location">
    <subcellularLocation>
        <location evidence="1">Cytoplasm</location>
    </subcellularLocation>
</comment>
<comment type="similarity">
    <text evidence="1">Belongs to the RNase H family.</text>
</comment>
<gene>
    <name evidence="1" type="primary">rnhA</name>
    <name type="ordered locus">Lferr_0563</name>
</gene>
<feature type="chain" id="PRO_1000117314" description="Ribonuclease H">
    <location>
        <begin position="1"/>
        <end position="158"/>
    </location>
</feature>
<feature type="domain" description="RNase H type-1" evidence="2">
    <location>
        <begin position="2"/>
        <end position="143"/>
    </location>
</feature>
<feature type="binding site" evidence="1">
    <location>
        <position position="11"/>
    </location>
    <ligand>
        <name>Mg(2+)</name>
        <dbReference type="ChEBI" id="CHEBI:18420"/>
        <label>1</label>
    </ligand>
</feature>
<feature type="binding site" evidence="1">
    <location>
        <position position="11"/>
    </location>
    <ligand>
        <name>Mg(2+)</name>
        <dbReference type="ChEBI" id="CHEBI:18420"/>
        <label>2</label>
    </ligand>
</feature>
<feature type="binding site" evidence="1">
    <location>
        <position position="49"/>
    </location>
    <ligand>
        <name>Mg(2+)</name>
        <dbReference type="ChEBI" id="CHEBI:18420"/>
        <label>1</label>
    </ligand>
</feature>
<feature type="binding site" evidence="1">
    <location>
        <position position="71"/>
    </location>
    <ligand>
        <name>Mg(2+)</name>
        <dbReference type="ChEBI" id="CHEBI:18420"/>
        <label>1</label>
    </ligand>
</feature>
<feature type="binding site" evidence="1">
    <location>
        <position position="135"/>
    </location>
    <ligand>
        <name>Mg(2+)</name>
        <dbReference type="ChEBI" id="CHEBI:18420"/>
        <label>2</label>
    </ligand>
</feature>
<dbReference type="EC" id="3.1.26.4" evidence="1"/>
<dbReference type="EMBL" id="CP001132">
    <property type="protein sequence ID" value="ACH82817.1"/>
    <property type="molecule type" value="Genomic_DNA"/>
</dbReference>
<dbReference type="RefSeq" id="WP_009567346.1">
    <property type="nucleotide sequence ID" value="NC_011206.1"/>
</dbReference>
<dbReference type="SMR" id="B5EMD8"/>
<dbReference type="GeneID" id="65279775"/>
<dbReference type="KEGG" id="afe:Lferr_0563"/>
<dbReference type="eggNOG" id="COG0328">
    <property type="taxonomic scope" value="Bacteria"/>
</dbReference>
<dbReference type="HOGENOM" id="CLU_030894_6_0_6"/>
<dbReference type="GO" id="GO:0005737">
    <property type="term" value="C:cytoplasm"/>
    <property type="evidence" value="ECO:0007669"/>
    <property type="project" value="UniProtKB-SubCell"/>
</dbReference>
<dbReference type="GO" id="GO:0000287">
    <property type="term" value="F:magnesium ion binding"/>
    <property type="evidence" value="ECO:0007669"/>
    <property type="project" value="UniProtKB-UniRule"/>
</dbReference>
<dbReference type="GO" id="GO:0003676">
    <property type="term" value="F:nucleic acid binding"/>
    <property type="evidence" value="ECO:0007669"/>
    <property type="project" value="InterPro"/>
</dbReference>
<dbReference type="GO" id="GO:0004523">
    <property type="term" value="F:RNA-DNA hybrid ribonuclease activity"/>
    <property type="evidence" value="ECO:0007669"/>
    <property type="project" value="UniProtKB-UniRule"/>
</dbReference>
<dbReference type="GO" id="GO:0043137">
    <property type="term" value="P:DNA replication, removal of RNA primer"/>
    <property type="evidence" value="ECO:0007669"/>
    <property type="project" value="TreeGrafter"/>
</dbReference>
<dbReference type="CDD" id="cd09278">
    <property type="entry name" value="RNase_HI_prokaryote_like"/>
    <property type="match status" value="1"/>
</dbReference>
<dbReference type="Gene3D" id="3.30.420.10">
    <property type="entry name" value="Ribonuclease H-like superfamily/Ribonuclease H"/>
    <property type="match status" value="1"/>
</dbReference>
<dbReference type="HAMAP" id="MF_00042">
    <property type="entry name" value="RNase_H"/>
    <property type="match status" value="1"/>
</dbReference>
<dbReference type="InterPro" id="IPR050092">
    <property type="entry name" value="RNase_H"/>
</dbReference>
<dbReference type="InterPro" id="IPR012337">
    <property type="entry name" value="RNaseH-like_sf"/>
</dbReference>
<dbReference type="InterPro" id="IPR002156">
    <property type="entry name" value="RNaseH_domain"/>
</dbReference>
<dbReference type="InterPro" id="IPR036397">
    <property type="entry name" value="RNaseH_sf"/>
</dbReference>
<dbReference type="InterPro" id="IPR022892">
    <property type="entry name" value="RNaseHI"/>
</dbReference>
<dbReference type="NCBIfam" id="NF001236">
    <property type="entry name" value="PRK00203.1"/>
    <property type="match status" value="1"/>
</dbReference>
<dbReference type="PANTHER" id="PTHR10642">
    <property type="entry name" value="RIBONUCLEASE H1"/>
    <property type="match status" value="1"/>
</dbReference>
<dbReference type="PANTHER" id="PTHR10642:SF26">
    <property type="entry name" value="RIBONUCLEASE H1"/>
    <property type="match status" value="1"/>
</dbReference>
<dbReference type="Pfam" id="PF00075">
    <property type="entry name" value="RNase_H"/>
    <property type="match status" value="1"/>
</dbReference>
<dbReference type="SUPFAM" id="SSF53098">
    <property type="entry name" value="Ribonuclease H-like"/>
    <property type="match status" value="1"/>
</dbReference>
<dbReference type="PROSITE" id="PS50879">
    <property type="entry name" value="RNASE_H_1"/>
    <property type="match status" value="1"/>
</dbReference>
<reference key="1">
    <citation type="submission" date="2008-08" db="EMBL/GenBank/DDBJ databases">
        <title>Complete sequence of Acidithiobacillus ferrooxidans ATCC 53993.</title>
        <authorList>
            <person name="Lucas S."/>
            <person name="Copeland A."/>
            <person name="Lapidus A."/>
            <person name="Glavina del Rio T."/>
            <person name="Dalin E."/>
            <person name="Tice H."/>
            <person name="Bruce D."/>
            <person name="Goodwin L."/>
            <person name="Pitluck S."/>
            <person name="Sims D."/>
            <person name="Brettin T."/>
            <person name="Detter J.C."/>
            <person name="Han C."/>
            <person name="Kuske C.R."/>
            <person name="Larimer F."/>
            <person name="Land M."/>
            <person name="Hauser L."/>
            <person name="Kyrpides N."/>
            <person name="Lykidis A."/>
            <person name="Borole A.P."/>
        </authorList>
    </citation>
    <scope>NUCLEOTIDE SEQUENCE [LARGE SCALE GENOMIC DNA]</scope>
    <source>
        <strain>ATCC 53993 / BNL-5-31</strain>
    </source>
</reference>
<keyword id="KW-0963">Cytoplasm</keyword>
<keyword id="KW-0255">Endonuclease</keyword>
<keyword id="KW-0378">Hydrolase</keyword>
<keyword id="KW-0460">Magnesium</keyword>
<keyword id="KW-0479">Metal-binding</keyword>
<keyword id="KW-0540">Nuclease</keyword>